<keyword id="KW-0025">Alternative splicing</keyword>
<keyword id="KW-0903">Direct protein sequencing</keyword>
<keyword id="KW-0494">Milk protein</keyword>
<keyword id="KW-0597">Phosphoprotein</keyword>
<keyword id="KW-1185">Reference proteome</keyword>
<keyword id="KW-0964">Secreted</keyword>
<keyword id="KW-0732">Signal</keyword>
<comment type="function">
    <text evidence="2">Important role in determination of the surface properties of the casein micelles.</text>
</comment>
<comment type="subcellular location">
    <subcellularLocation>
        <location evidence="5">Secreted</location>
    </subcellularLocation>
</comment>
<comment type="alternative products">
    <event type="alternative splicing"/>
    <isoform>
        <id>Q9GKK3-1</id>
        <name evidence="8">1</name>
        <name evidence="8">B</name>
        <sequence type="displayed"/>
    </isoform>
    <isoform>
        <id>Q9GKK3-2</id>
        <name evidence="6">2</name>
        <sequence type="described" ref="VSP_051779"/>
    </isoform>
    <isoform>
        <id>Q9GKK3-3</id>
        <name evidence="9">3</name>
        <name evidence="9">low molecular weight beta-casein</name>
        <sequence type="described" ref="VSP_051780"/>
    </isoform>
</comment>
<comment type="tissue specificity">
    <text evidence="13">Mammary gland specific. Secreted in milk.</text>
</comment>
<comment type="PTM">
    <text evidence="8 10">There are at least five different forms found in milk, with varying degrees of phosphorylation. These include form 3-P which is phosphorylated at three sites that have not been determined, this form is present in very low amounts, form 4-P which is phosphorylated at four sites, form 5-P which is phosphorylated at five sites, form 6-P which is phosphorylated at six sites, and form 7-P which is phosphorylated at seven sites.</text>
</comment>
<comment type="PTM">
    <text evidence="8">Spontaneous deamidation of Asn-150 produces aspartate or isoaspartate.</text>
</comment>
<comment type="mass spectrometry">
    <molecule>Isoform 1</molecule>
    <text>Dephosphorylated. The measured range is 16-241.</text>
</comment>
<comment type="mass spectrometry">
    <molecule>Isoform 3</molecule>
    <text>Dephosphorylated. The measured range is 16-109.</text>
</comment>
<comment type="mass spectrometry">
    <molecule>Isoform 3</molecule>
    <text>Form 4-P. The measured range is 16-109.</text>
</comment>
<comment type="mass spectrometry">
    <molecule>Isoform 3</molecule>
    <text>Form 5-P. The measured range is 16-109.</text>
</comment>
<comment type="mass spectrometry">
    <molecule>Isoform 3</molecule>
    <text>Form 6-P. The measured range is 16-109.</text>
</comment>
<comment type="mass spectrometry">
    <molecule>Isoform 3</molecule>
    <text>Form 7-P. The measured range is 16-109.</text>
</comment>
<comment type="miscellaneous">
    <molecule>Isoform 3</molecule>
    <text evidence="9">Accounts for 4% of total casein.</text>
</comment>
<comment type="similarity">
    <text evidence="3">Belongs to the beta-casein family.</text>
</comment>
<sequence>MKILILACLVALALAREKEELNVSSETVESLSSNEPDSSSEESITHINKEKLQKFKHEGQQQREVERQDKISRFVQPQPVVYPYAEPVPYAVVPQSILPLAQPPILPFLQPEIMEVSQAKETILPKRKVMPFLKSPIVPFSERQILNPTNGENLRLPVHLIQPFMHQVPQSLLQTLMLPSQPVLSPPQSKVAPFPQPVVPYPQRDTPVQAFLLYQDPRLGPTGELDPATQPIVAVHNPVIV</sequence>
<dbReference type="EMBL" id="AF214526">
    <property type="protein sequence ID" value="AAG43954.1"/>
    <property type="molecule type" value="mRNA"/>
</dbReference>
<dbReference type="RefSeq" id="NP_001075321.1">
    <molecule id="Q9GKK3-2"/>
    <property type="nucleotide sequence ID" value="NM_001081852.1"/>
</dbReference>
<dbReference type="RefSeq" id="XP_070117749.1">
    <molecule id="Q9GKK3-1"/>
    <property type="nucleotide sequence ID" value="XM_070261648.1"/>
</dbReference>
<dbReference type="FunCoup" id="Q9GKK3">
    <property type="interactions" value="38"/>
</dbReference>
<dbReference type="STRING" id="9796.ENSECAP00000042870"/>
<dbReference type="iPTMnet" id="Q9GKK3"/>
<dbReference type="PaxDb" id="9796-ENSECAP00000042870"/>
<dbReference type="PeptideAtlas" id="Q9GKK3"/>
<dbReference type="Ensembl" id="ENSECAT00000064283.3">
    <molecule id="Q9GKK3-1"/>
    <property type="protein sequence ID" value="ENSECAP00000042870.1"/>
    <property type="gene ID" value="ENSECAG00000009837.4"/>
</dbReference>
<dbReference type="Ensembl" id="ENSECAT00000132152.1">
    <molecule id="Q9GKK3-2"/>
    <property type="protein sequence ID" value="ENSECAP00000056053.1"/>
    <property type="gene ID" value="ENSECAG00000009837.4"/>
</dbReference>
<dbReference type="GeneID" id="100033903"/>
<dbReference type="KEGG" id="ecb:100033903"/>
<dbReference type="CTD" id="1447"/>
<dbReference type="GeneTree" id="ENSGT00390000001890"/>
<dbReference type="HOGENOM" id="CLU_106775_0_0_1"/>
<dbReference type="InParanoid" id="Q9GKK3"/>
<dbReference type="OMA" id="EIMEVPK"/>
<dbReference type="OrthoDB" id="9838331at2759"/>
<dbReference type="TreeFam" id="TF336929"/>
<dbReference type="Proteomes" id="UP000002281">
    <property type="component" value="Chromosome 3"/>
</dbReference>
<dbReference type="Bgee" id="ENSECAG00000009837">
    <property type="expression patterns" value="Expressed in prefrontal cortex"/>
</dbReference>
<dbReference type="GO" id="GO:0005615">
    <property type="term" value="C:extracellular space"/>
    <property type="evidence" value="ECO:0000318"/>
    <property type="project" value="GO_Central"/>
</dbReference>
<dbReference type="GO" id="GO:0004869">
    <property type="term" value="F:cysteine-type endopeptidase inhibitor activity"/>
    <property type="evidence" value="ECO:0007669"/>
    <property type="project" value="Ensembl"/>
</dbReference>
<dbReference type="GO" id="GO:0007595">
    <property type="term" value="P:lactation"/>
    <property type="evidence" value="ECO:0007669"/>
    <property type="project" value="Ensembl"/>
</dbReference>
<dbReference type="InterPro" id="IPR001588">
    <property type="entry name" value="Casein"/>
</dbReference>
<dbReference type="InterPro" id="IPR016345">
    <property type="entry name" value="Casein_beta"/>
</dbReference>
<dbReference type="InterPro" id="IPR031305">
    <property type="entry name" value="Casein_CS"/>
</dbReference>
<dbReference type="PANTHER" id="PTHR11500">
    <property type="entry name" value="BETA CASEIN"/>
    <property type="match status" value="1"/>
</dbReference>
<dbReference type="PANTHER" id="PTHR11500:SF0">
    <property type="entry name" value="BETA-CASEIN"/>
    <property type="match status" value="1"/>
</dbReference>
<dbReference type="Pfam" id="PF00363">
    <property type="entry name" value="Casein"/>
    <property type="match status" value="1"/>
</dbReference>
<dbReference type="PIRSF" id="PIRSF002372">
    <property type="entry name" value="Beta-casein"/>
    <property type="match status" value="1"/>
</dbReference>
<dbReference type="PROSITE" id="PS00306">
    <property type="entry name" value="CASEIN_ALPHA_BETA"/>
    <property type="match status" value="1"/>
</dbReference>
<gene>
    <name evidence="2" type="primary">CSN2</name>
</gene>
<accession>Q9GKK3</accession>
<name>CASB_HORSE</name>
<organism>
    <name type="scientific">Equus caballus</name>
    <name type="common">Horse</name>
    <dbReference type="NCBI Taxonomy" id="9796"/>
    <lineage>
        <taxon>Eukaryota</taxon>
        <taxon>Metazoa</taxon>
        <taxon>Chordata</taxon>
        <taxon>Craniata</taxon>
        <taxon>Vertebrata</taxon>
        <taxon>Euteleostomi</taxon>
        <taxon>Mammalia</taxon>
        <taxon>Eutheria</taxon>
        <taxon>Laurasiatheria</taxon>
        <taxon>Perissodactyla</taxon>
        <taxon>Equidae</taxon>
        <taxon>Equus</taxon>
    </lineage>
</organism>
<evidence type="ECO:0000250" key="1">
    <source>
        <dbReference type="UniProtKB" id="P05814"/>
    </source>
</evidence>
<evidence type="ECO:0000250" key="2">
    <source>
        <dbReference type="UniProtKB" id="P39037"/>
    </source>
</evidence>
<evidence type="ECO:0000255" key="3"/>
<evidence type="ECO:0000256" key="4">
    <source>
        <dbReference type="SAM" id="MobiDB-lite"/>
    </source>
</evidence>
<evidence type="ECO:0000269" key="5">
    <source>
    </source>
</evidence>
<evidence type="ECO:0000269" key="6">
    <source>
    </source>
</evidence>
<evidence type="ECO:0000269" key="7">
    <source>
    </source>
</evidence>
<evidence type="ECO:0000269" key="8">
    <source>
    </source>
</evidence>
<evidence type="ECO:0000269" key="9">
    <source>
    </source>
</evidence>
<evidence type="ECO:0000269" key="10">
    <source>
    </source>
</evidence>
<evidence type="ECO:0000303" key="11">
    <source>
    </source>
</evidence>
<evidence type="ECO:0000303" key="12">
    <source>
    </source>
</evidence>
<evidence type="ECO:0000305" key="13"/>
<evidence type="ECO:0000312" key="14">
    <source>
        <dbReference type="EMBL" id="AAG43954.1"/>
    </source>
</evidence>
<protein>
    <recommendedName>
        <fullName>Beta-casein</fullName>
    </recommendedName>
</protein>
<feature type="signal peptide" evidence="3 5">
    <location>
        <begin position="1"/>
        <end position="15"/>
    </location>
</feature>
<feature type="chain" id="PRO_0000004474" description="Beta-casein">
    <location>
        <begin position="16"/>
        <end position="241"/>
    </location>
</feature>
<feature type="region of interest" description="Disordered" evidence="4">
    <location>
        <begin position="21"/>
        <end position="45"/>
    </location>
</feature>
<feature type="site" description="Not phosphorylated">
    <location>
        <position position="30"/>
    </location>
</feature>
<feature type="site" description="Not phosphorylated">
    <location>
        <position position="32"/>
    </location>
</feature>
<feature type="modified residue" description="Phosphoserine; in form 4-P, form 5-P, form 6-P and form 7-P" evidence="10">
    <location>
        <position position="24"/>
    </location>
</feature>
<feature type="modified residue" description="Phosphoserine; in form 7-P" evidence="10">
    <location>
        <position position="25"/>
    </location>
</feature>
<feature type="modified residue" description="Phosphothreonine; in form 6-P and form 7-P" evidence="10">
    <location>
        <position position="27"/>
    </location>
</feature>
<feature type="modified residue" description="Phosphoserine" evidence="1">
    <location>
        <position position="30"/>
    </location>
</feature>
<feature type="modified residue" description="Phosphoserine" evidence="1">
    <location>
        <position position="32"/>
    </location>
</feature>
<feature type="modified residue" description="Phosphoserine; in form 5-P, form 6-P and form 7-P" evidence="10">
    <location>
        <position position="33"/>
    </location>
</feature>
<feature type="modified residue" description="Phosphoserine; in form 4-P, form 5-P, form 6-P and form 7-P" evidence="10">
    <location>
        <position position="38"/>
    </location>
</feature>
<feature type="modified residue" description="Phosphoserine; in form 4-P, form 5-P, form 6-P and form 7-P" evidence="10">
    <location>
        <position position="39"/>
    </location>
</feature>
<feature type="modified residue" description="Phosphoserine; in form 4-P, form 5-P, form 6-P and form 7-P" evidence="10">
    <location>
        <position position="40"/>
    </location>
</feature>
<feature type="modified residue" description="Deamidated asparagine" evidence="8">
    <location>
        <position position="150"/>
    </location>
</feature>
<feature type="splice variant" id="VSP_051779" description="In isoform 2." evidence="11">
    <location>
        <begin position="42"/>
        <end position="49"/>
    </location>
</feature>
<feature type="splice variant" id="VSP_051780" description="In isoform 3." evidence="12">
    <location>
        <begin position="65"/>
        <end position="196"/>
    </location>
</feature>
<reference evidence="13 14" key="1">
    <citation type="journal article" date="2003" name="J. Dairy Res.">
        <title>Characterization of equine cDNA sequences for alphaS1-, beta- and kappa-casein.</title>
        <authorList>
            <person name="Lenasi T."/>
            <person name="Rogelj I."/>
            <person name="Dovc P."/>
        </authorList>
    </citation>
    <scope>NUCLEOTIDE SEQUENCE [MRNA] (ISOFORM 2)</scope>
    <source>
        <strain evidence="6">Warmblood</strain>
        <tissue evidence="14">Lactating mammary gland</tissue>
    </source>
</reference>
<reference key="2">
    <citation type="journal article" date="2006" name="Proteomics">
        <title>Determination of the phosphorylation level and deamidation susceptibility of equine beta-casein.</title>
        <authorList>
            <person name="Girardet J.-M."/>
            <person name="Miclo L."/>
            <person name="Florent S."/>
            <person name="Molle D."/>
            <person name="Gaillard J.-L."/>
        </authorList>
    </citation>
    <scope>PROTEIN SEQUENCE OF 16-241 (ISOFORM 1)</scope>
    <scope>DEAMIDATION AT ASN-150</scope>
    <scope>MASS SPECTROMETRY</scope>
    <source>
        <strain evidence="8">Haflinger</strain>
        <tissue evidence="8">Milk</tissue>
    </source>
</reference>
<reference evidence="13" key="3">
    <citation type="journal article" date="2007" name="Proteomics">
        <title>The primary structure of a low-M(r) multiphosphorylated variant of beta-casein in equine milk.</title>
        <authorList>
            <person name="Miclo L."/>
            <person name="Girardet J.-M."/>
            <person name="Egito A.S."/>
            <person name="Molle D."/>
            <person name="Martin P."/>
            <person name="Gaillard J.-L."/>
        </authorList>
    </citation>
    <scope>PROTEIN SEQUENCE OF 16-241 (ISOFORM 3)</scope>
    <scope>MASS SPECTROMETRY</scope>
    <source>
        <strain evidence="9">Haflinger</strain>
        <tissue evidence="9">Milk</tissue>
    </source>
</reference>
<reference evidence="13" key="4">
    <citation type="journal article" date="2004" name="Proteomics">
        <title>Proteomic tools to characterize the protein fraction of Equidae milk.</title>
        <authorList>
            <person name="Miranda G."/>
            <person name="Mahe M.-F."/>
            <person name="Leroux C."/>
            <person name="Martin P."/>
        </authorList>
    </citation>
    <scope>PROTEIN SEQUENCE OF 16-50 (ISOFORM 1)</scope>
    <scope>PROTEIN SEQUENCE OF 16-58 (ISOFORM 2)</scope>
    <source>
        <strain evidence="7">Welsh pony</strain>
        <tissue evidence="7">Milk</tissue>
    </source>
</reference>
<reference evidence="13" key="5">
    <citation type="journal article" date="2002" name="J. Dairy Sci.">
        <title>Separation and characterization of mares' milk alpha(s1)-, beta-, kappa-caseins, gamma-casein-like, and proteose peptone component 5-like peptides.</title>
        <authorList>
            <person name="Egito A.S."/>
            <person name="Miclo L."/>
            <person name="Lopez C."/>
            <person name="Adam A."/>
            <person name="Girardet J.-M."/>
            <person name="Gaillard J.-L."/>
        </authorList>
    </citation>
    <scope>PROTEIN SEQUENCE OF 16-30</scope>
    <scope>SUBCELLULAR LOCATION</scope>
    <source>
        <strain evidence="5">Haflinger</strain>
        <tissue evidence="5">Milk</tissue>
    </source>
</reference>
<reference key="6">
    <citation type="journal article" date="2010" name="Rapid Commun. Mass Spectrom.">
        <title>Identification of phosphorylation sites of equine beta-casein isoforms.</title>
        <authorList>
            <person name="Mateos A."/>
            <person name="Girardet J.M."/>
            <person name="Molle D."/>
            <person name="Corbier C."/>
            <person name="Gaillard J.L."/>
            <person name="Miclo L."/>
        </authorList>
    </citation>
    <scope>PHOSPHORYLATION AT SER-24; SER-25; THR-27; SER-33; SER-38; SER-39 AND SER-40</scope>
</reference>
<proteinExistence type="evidence at protein level"/>